<gene>
    <name type="primary">YSL15</name>
    <name type="ordered locus">Os02g0650300</name>
    <name type="ordered locus">LOC_Os02g43410</name>
    <name type="ORF">OSJNBb0012J10.10-1</name>
    <name type="ORF">P0048B08.34-1</name>
</gene>
<comment type="function">
    <text evidence="4">Involved in Fe(3+) uptake from the rhizosphere and phloem transport of iron. Plays an important role in iron homeostasis during the early stages of growth. Transports Fe(3+)-phytosiderophore, but not Fe(3+)- or Fe(2+)-nicotianamine. May not transport other chelated metals.</text>
</comment>
<comment type="subcellular location">
    <subcellularLocation>
        <location evidence="6">Cell membrane</location>
        <topology evidence="6">Multi-pass membrane protein</topology>
    </subcellularLocation>
</comment>
<comment type="tissue specificity">
    <text evidence="4">Expressed in root phloem and at low levels in the shoot companion cells.</text>
</comment>
<comment type="developmental stage">
    <text evidence="4">Before anthesis, expressed in the vascular bundles of spikelets, stamens, pistils, and husk. After fertilization, expressed in the husk, spikelets, and pistil. From 3 to 10 days after anthesis, expressed in the dorsal vascular bundles of developing ovaries. At 15 days after anthesis, expressed in the embryo and dorsal vascular bundles. At 30 days after anthesis, expressed in the scutellum and endosperm.</text>
</comment>
<comment type="induction">
    <text evidence="3 4">In roots by iron deficiency.</text>
</comment>
<comment type="similarity">
    <text evidence="5">Belongs to the YSL (TC 2.A.67.2) family.</text>
</comment>
<comment type="sequence caution" evidence="5">
    <conflict type="erroneous gene model prediction">
        <sequence resource="EMBL-CDS" id="BAF09501"/>
    </conflict>
</comment>
<evidence type="ECO:0000255" key="1"/>
<evidence type="ECO:0000256" key="2">
    <source>
        <dbReference type="SAM" id="MobiDB-lite"/>
    </source>
</evidence>
<evidence type="ECO:0000269" key="3">
    <source>
    </source>
</evidence>
<evidence type="ECO:0000269" key="4">
    <source>
    </source>
</evidence>
<evidence type="ECO:0000305" key="5"/>
<evidence type="ECO:0000305" key="6">
    <source>
    </source>
</evidence>
<protein>
    <recommendedName>
        <fullName>Iron-phytosiderophore transporter YSL15</fullName>
    </recommendedName>
    <alternativeName>
        <fullName>Protein YELLOW STRIPE LIKE 15</fullName>
        <shortName>OsYSL15</shortName>
    </alternativeName>
</protein>
<sequence>MEHADADRTRVAPEIGSLHDEDAEADPARAREMERLQPWREQVTARGVVAAALIGFVFSVIVMKIALTTGLVPTLNISAALLAFLALRGWTRALERLGFSPRPFTRQENTVVQTCAVACYTIAFGGGFGSTLLGLNKRTYELAGNSPGNVPGSYKEPGIGWMVGLLLAISFAGNLSLIPLRKALVVDYKLTYPSGTATAVLINGFHTAQGDKNAKLQLHGFLKYFGLSLFWSFFQWFYTGGNACGFVQFPTFGLKAWKQSFFFDFSLTYVGAGMICSHLVNLSTLLGAVISWGIMWPLISKHKGDWYPANIPESSMTSLYGYKSFLCIALIMGDGLYHFVKVTGVTAKSLHNRFNRKSVSNTASEEGDMVSLDDLQRDEVFKRGTVPSWMAYSGYFLLSIIAVITIPIMFRQVKWYYVIIAYALGPVLGFANSYGAGLTDINMGYNYGKIALFVFAAWAGKDNGVIAGLVVGTLVKQLVLVSADLMHDLKTGHLTLTSPRSMLVGELIGTGIGCFIAPLTFMLFYRAFDIGNPDGYWKAPYALIYRNMAILGIEGISALPKHCLSLSVGFFAFAVLTNVARDALPARYKKLVPLPTAMAVPFLVGASFAIDMCVGSLVLFAWNKMNKKEAAFMVPAVASGLMCGDGIWTFPSSILALAKIKPPICMKFTPGS</sequence>
<dbReference type="EMBL" id="AB190923">
    <property type="protein sequence ID" value="BAE91893.1"/>
    <property type="molecule type" value="mRNA"/>
</dbReference>
<dbReference type="EMBL" id="AP004868">
    <property type="protein sequence ID" value="BAD25586.1"/>
    <property type="molecule type" value="Genomic_DNA"/>
</dbReference>
<dbReference type="EMBL" id="AP007203">
    <property type="protein sequence ID" value="BAD26556.1"/>
    <property type="molecule type" value="Genomic_DNA"/>
</dbReference>
<dbReference type="EMBL" id="AP008208">
    <property type="protein sequence ID" value="BAF09501.1"/>
    <property type="status" value="ALT_SEQ"/>
    <property type="molecule type" value="Genomic_DNA"/>
</dbReference>
<dbReference type="EMBL" id="AP014958">
    <property type="protein sequence ID" value="BAS80048.1"/>
    <property type="molecule type" value="Genomic_DNA"/>
</dbReference>
<dbReference type="RefSeq" id="XP_015623627.1">
    <property type="nucleotide sequence ID" value="XM_015768141.1"/>
</dbReference>
<dbReference type="SMR" id="Q6H3Z3"/>
<dbReference type="FunCoup" id="Q6H3Z3">
    <property type="interactions" value="49"/>
</dbReference>
<dbReference type="STRING" id="39947.Q6H3Z3"/>
<dbReference type="PaxDb" id="39947-Q6H3Z3"/>
<dbReference type="EnsemblPlants" id="Os02t0650300-01">
    <property type="protein sequence ID" value="Os02t0650300-01"/>
    <property type="gene ID" value="Os02g0650300"/>
</dbReference>
<dbReference type="Gramene" id="Os02t0650300-01">
    <property type="protein sequence ID" value="Os02t0650300-01"/>
    <property type="gene ID" value="Os02g0650300"/>
</dbReference>
<dbReference type="eggNOG" id="ENOG502QQ2H">
    <property type="taxonomic scope" value="Eukaryota"/>
</dbReference>
<dbReference type="HOGENOM" id="CLU_015477_2_0_1"/>
<dbReference type="InParanoid" id="Q6H3Z3"/>
<dbReference type="OMA" id="VELPHIC"/>
<dbReference type="OrthoDB" id="627262at2759"/>
<dbReference type="PlantReactome" id="R-OSA-8858053">
    <property type="pathway name" value="Polar auxin transport"/>
</dbReference>
<dbReference type="PlantReactome" id="R-OSA-9025727">
    <property type="pathway name" value="Iron uptake and transport in root vascular system"/>
</dbReference>
<dbReference type="Proteomes" id="UP000000763">
    <property type="component" value="Chromosome 2"/>
</dbReference>
<dbReference type="Proteomes" id="UP000059680">
    <property type="component" value="Chromosome 2"/>
</dbReference>
<dbReference type="ExpressionAtlas" id="Q6H3Z3">
    <property type="expression patterns" value="baseline and differential"/>
</dbReference>
<dbReference type="GO" id="GO:0005886">
    <property type="term" value="C:plasma membrane"/>
    <property type="evidence" value="ECO:0000318"/>
    <property type="project" value="GO_Central"/>
</dbReference>
<dbReference type="GO" id="GO:0051980">
    <property type="term" value="F:iron-nicotianamine transmembrane transporter activity"/>
    <property type="evidence" value="ECO:0000318"/>
    <property type="project" value="GO_Central"/>
</dbReference>
<dbReference type="GO" id="GO:0035673">
    <property type="term" value="F:oligopeptide transmembrane transporter activity"/>
    <property type="evidence" value="ECO:0007669"/>
    <property type="project" value="InterPro"/>
</dbReference>
<dbReference type="GO" id="GO:0010039">
    <property type="term" value="P:response to iron ion"/>
    <property type="evidence" value="ECO:0000318"/>
    <property type="project" value="GO_Central"/>
</dbReference>
<dbReference type="GO" id="GO:0048316">
    <property type="term" value="P:seed development"/>
    <property type="evidence" value="ECO:0000318"/>
    <property type="project" value="GO_Central"/>
</dbReference>
<dbReference type="InterPro" id="IPR004813">
    <property type="entry name" value="OPT"/>
</dbReference>
<dbReference type="InterPro" id="IPR045035">
    <property type="entry name" value="YSL-like"/>
</dbReference>
<dbReference type="NCBIfam" id="TIGR00728">
    <property type="entry name" value="OPT_sfam"/>
    <property type="match status" value="1"/>
</dbReference>
<dbReference type="PANTHER" id="PTHR31645:SF17">
    <property type="entry name" value="IRON-PHYTOSIDEROPHORE TRANSPORTER YSL15"/>
    <property type="match status" value="1"/>
</dbReference>
<dbReference type="PANTHER" id="PTHR31645">
    <property type="entry name" value="OLIGOPEPTIDE TRANSPORTER YGL114W-RELATED"/>
    <property type="match status" value="1"/>
</dbReference>
<dbReference type="Pfam" id="PF03169">
    <property type="entry name" value="OPT"/>
    <property type="match status" value="1"/>
</dbReference>
<accession>Q6H3Z3</accession>
<accession>A0A0P0VMC8</accession>
<accession>Q0DZ37</accession>
<keyword id="KW-1003">Cell membrane</keyword>
<keyword id="KW-0406">Ion transport</keyword>
<keyword id="KW-0408">Iron</keyword>
<keyword id="KW-0410">Iron transport</keyword>
<keyword id="KW-0472">Membrane</keyword>
<keyword id="KW-1185">Reference proteome</keyword>
<keyword id="KW-0812">Transmembrane</keyword>
<keyword id="KW-1133">Transmembrane helix</keyword>
<keyword id="KW-0813">Transport</keyword>
<reference key="1">
    <citation type="journal article" date="2004" name="Plant J.">
        <title>OsYSL2 is a rice metal-nicotianamine transporter that is regulated by iron and expressed in the phloem.</title>
        <authorList>
            <person name="Koike S."/>
            <person name="Inoue H."/>
            <person name="Mizuno D."/>
            <person name="Takahashi M."/>
            <person name="Nakanishi H."/>
            <person name="Mori S."/>
            <person name="Nishizawa N.K."/>
        </authorList>
    </citation>
    <scope>NUCLEOTIDE SEQUENCE [MRNA]</scope>
    <scope>INDUCTION</scope>
    <scope>GENE FAMILY</scope>
    <scope>NOMENCLATURE</scope>
    <source>
        <strain>cv. Nipponbare</strain>
    </source>
</reference>
<reference key="2">
    <citation type="journal article" date="2005" name="Nature">
        <title>The map-based sequence of the rice genome.</title>
        <authorList>
            <consortium name="International rice genome sequencing project (IRGSP)"/>
        </authorList>
    </citation>
    <scope>NUCLEOTIDE SEQUENCE [LARGE SCALE GENOMIC DNA]</scope>
    <source>
        <strain>cv. Nipponbare</strain>
    </source>
</reference>
<reference key="3">
    <citation type="journal article" date="2008" name="Nucleic Acids Res.">
        <title>The rice annotation project database (RAP-DB): 2008 update.</title>
        <authorList>
            <consortium name="The rice annotation project (RAP)"/>
        </authorList>
    </citation>
    <scope>GENOME REANNOTATION</scope>
    <source>
        <strain>cv. Nipponbare</strain>
    </source>
</reference>
<reference key="4">
    <citation type="journal article" date="2013" name="Rice">
        <title>Improvement of the Oryza sativa Nipponbare reference genome using next generation sequence and optical map data.</title>
        <authorList>
            <person name="Kawahara Y."/>
            <person name="de la Bastide M."/>
            <person name="Hamilton J.P."/>
            <person name="Kanamori H."/>
            <person name="McCombie W.R."/>
            <person name="Ouyang S."/>
            <person name="Schwartz D.C."/>
            <person name="Tanaka T."/>
            <person name="Wu J."/>
            <person name="Zhou S."/>
            <person name="Childs K.L."/>
            <person name="Davidson R.M."/>
            <person name="Lin H."/>
            <person name="Quesada-Ocampo L."/>
            <person name="Vaillancourt B."/>
            <person name="Sakai H."/>
            <person name="Lee S.S."/>
            <person name="Kim J."/>
            <person name="Numa H."/>
            <person name="Itoh T."/>
            <person name="Buell C.R."/>
            <person name="Matsumoto T."/>
        </authorList>
    </citation>
    <scope>GENOME REANNOTATION</scope>
    <source>
        <strain>cv. Nipponbare</strain>
    </source>
</reference>
<reference key="5">
    <citation type="journal article" date="2009" name="J. Biol. Chem.">
        <title>Rice OsYSL15 is an iron-regulated iron(III)-deoxymugineic acid Transporter expressed in the roots and is essential for iron uptake in early growth of the seedlings.</title>
        <authorList>
            <person name="Inoue H."/>
            <person name="Kobayashi T."/>
            <person name="Nozoye T."/>
            <person name="Takahashi M."/>
            <person name="Kakei Y."/>
            <person name="Suzuki K."/>
            <person name="Nakazono M."/>
            <person name="Nakanishi H."/>
            <person name="Mori S."/>
            <person name="Nishizawa N.K."/>
        </authorList>
    </citation>
    <scope>FUNCTION</scope>
    <scope>SUBCELLULAR LOCATION</scope>
    <scope>TISSUE SPECIFICITY</scope>
    <scope>DEVELOPMENTAL STAGE</scope>
    <scope>INDUCTION</scope>
</reference>
<proteinExistence type="evidence at transcript level"/>
<organism>
    <name type="scientific">Oryza sativa subsp. japonica</name>
    <name type="common">Rice</name>
    <dbReference type="NCBI Taxonomy" id="39947"/>
    <lineage>
        <taxon>Eukaryota</taxon>
        <taxon>Viridiplantae</taxon>
        <taxon>Streptophyta</taxon>
        <taxon>Embryophyta</taxon>
        <taxon>Tracheophyta</taxon>
        <taxon>Spermatophyta</taxon>
        <taxon>Magnoliopsida</taxon>
        <taxon>Liliopsida</taxon>
        <taxon>Poales</taxon>
        <taxon>Poaceae</taxon>
        <taxon>BOP clade</taxon>
        <taxon>Oryzoideae</taxon>
        <taxon>Oryzeae</taxon>
        <taxon>Oryzinae</taxon>
        <taxon>Oryza</taxon>
        <taxon>Oryza sativa</taxon>
    </lineage>
</organism>
<name>YSL15_ORYSJ</name>
<feature type="chain" id="PRO_0000363878" description="Iron-phytosiderophore transporter YSL15">
    <location>
        <begin position="1"/>
        <end position="672"/>
    </location>
</feature>
<feature type="transmembrane region" description="Helical" evidence="1">
    <location>
        <begin position="47"/>
        <end position="67"/>
    </location>
</feature>
<feature type="transmembrane region" description="Helical" evidence="1">
    <location>
        <begin position="70"/>
        <end position="90"/>
    </location>
</feature>
<feature type="transmembrane region" description="Helical" evidence="1">
    <location>
        <begin position="115"/>
        <end position="135"/>
    </location>
</feature>
<feature type="transmembrane region" description="Helical" evidence="1">
    <location>
        <begin position="158"/>
        <end position="178"/>
    </location>
</feature>
<feature type="transmembrane region" description="Helical" evidence="1">
    <location>
        <begin position="218"/>
        <end position="238"/>
    </location>
</feature>
<feature type="transmembrane region" description="Helical" evidence="1">
    <location>
        <begin position="279"/>
        <end position="299"/>
    </location>
</feature>
<feature type="transmembrane region" description="Helical" evidence="1">
    <location>
        <begin position="325"/>
        <end position="345"/>
    </location>
</feature>
<feature type="transmembrane region" description="Helical" evidence="1">
    <location>
        <begin position="390"/>
        <end position="410"/>
    </location>
</feature>
<feature type="transmembrane region" description="Helical" evidence="1">
    <location>
        <begin position="418"/>
        <end position="438"/>
    </location>
</feature>
<feature type="transmembrane region" description="Helical" evidence="1">
    <location>
        <begin position="450"/>
        <end position="470"/>
    </location>
</feature>
<feature type="transmembrane region" description="Helical" evidence="1">
    <location>
        <begin position="504"/>
        <end position="524"/>
    </location>
</feature>
<feature type="transmembrane region" description="Helical" evidence="1">
    <location>
        <begin position="556"/>
        <end position="576"/>
    </location>
</feature>
<feature type="transmembrane region" description="Helical" evidence="1">
    <location>
        <begin position="602"/>
        <end position="622"/>
    </location>
</feature>
<feature type="transmembrane region" description="Helical" evidence="1">
    <location>
        <begin position="630"/>
        <end position="650"/>
    </location>
</feature>
<feature type="region of interest" description="Disordered" evidence="2">
    <location>
        <begin position="1"/>
        <end position="27"/>
    </location>
</feature>
<feature type="compositionally biased region" description="Basic and acidic residues" evidence="2">
    <location>
        <begin position="1"/>
        <end position="11"/>
    </location>
</feature>